<evidence type="ECO:0000255" key="1">
    <source>
        <dbReference type="HAMAP-Rule" id="MF_04064"/>
    </source>
</evidence>
<evidence type="ECO:0000256" key="2">
    <source>
        <dbReference type="SAM" id="MobiDB-lite"/>
    </source>
</evidence>
<name>PB1F2_I75A0</name>
<protein>
    <recommendedName>
        <fullName evidence="1">Protein PB1-F2</fullName>
    </recommendedName>
</protein>
<organism>
    <name type="scientific">Influenza A virus (strain A/Beijing/39/1975 H3N2)</name>
    <dbReference type="NCBI Taxonomy" id="383596"/>
    <lineage>
        <taxon>Viruses</taxon>
        <taxon>Riboviria</taxon>
        <taxon>Orthornavirae</taxon>
        <taxon>Negarnaviricota</taxon>
        <taxon>Polyploviricotina</taxon>
        <taxon>Insthoviricetes</taxon>
        <taxon>Articulavirales</taxon>
        <taxon>Orthomyxoviridae</taxon>
        <taxon>Alphainfluenzavirus</taxon>
        <taxon>Alphainfluenzavirus influenzae</taxon>
        <taxon>Influenza A virus</taxon>
    </lineage>
</organism>
<reference key="1">
    <citation type="submission" date="2005-11" db="EMBL/GenBank/DDBJ databases">
        <title>The NIAID influenza genome sequencing project.</title>
        <authorList>
            <person name="Ghedin E."/>
            <person name="Spiro D."/>
            <person name="Miller N."/>
            <person name="Zaborsky J."/>
            <person name="Feldblyum T."/>
            <person name="Subbu V."/>
            <person name="Shumway M."/>
            <person name="Sparenborg J."/>
            <person name="Groveman L."/>
            <person name="Halpin R."/>
            <person name="Sitz J."/>
            <person name="Koo H."/>
            <person name="Salzberg S.L."/>
            <person name="Webster R.G."/>
            <person name="Hoffmann E."/>
            <person name="Krauss S."/>
            <person name="Naeve C."/>
            <person name="Bao Y."/>
            <person name="Bolotov P."/>
            <person name="Dernovoy D."/>
            <person name="Kiryutin B."/>
            <person name="Lipman D.J."/>
            <person name="Tatusova T."/>
        </authorList>
    </citation>
    <scope>NUCLEOTIDE SEQUENCE [GENOMIC RNA]</scope>
</reference>
<accession>Q30NP2</accession>
<sequence>MEQEQDTPWTQLTEHINIQKKGNGQQTQRLGRPNLTQLMDHYLRIMSQADMHKQTVSWKQWLSLKNPTQGFLKTRALKRWKSFNKQGWTD</sequence>
<dbReference type="EMBL" id="CY006050">
    <property type="protein sequence ID" value="ABB46401.1"/>
    <property type="molecule type" value="Genomic_RNA"/>
</dbReference>
<dbReference type="SMR" id="Q30NP2"/>
<dbReference type="Proteomes" id="UP000000827">
    <property type="component" value="Genome"/>
</dbReference>
<dbReference type="GO" id="GO:0044164">
    <property type="term" value="C:host cell cytosol"/>
    <property type="evidence" value="ECO:0007669"/>
    <property type="project" value="UniProtKB-SubCell"/>
</dbReference>
<dbReference type="GO" id="GO:0044192">
    <property type="term" value="C:host cell mitochondrial inner membrane"/>
    <property type="evidence" value="ECO:0007669"/>
    <property type="project" value="UniProtKB-SubCell"/>
</dbReference>
<dbReference type="GO" id="GO:0042025">
    <property type="term" value="C:host cell nucleus"/>
    <property type="evidence" value="ECO:0007669"/>
    <property type="project" value="UniProtKB-SubCell"/>
</dbReference>
<dbReference type="GO" id="GO:0016020">
    <property type="term" value="C:membrane"/>
    <property type="evidence" value="ECO:0007669"/>
    <property type="project" value="UniProtKB-UniRule"/>
</dbReference>
<dbReference type="GO" id="GO:0052150">
    <property type="term" value="P:symbiont-mediated perturbation of host apoptosis"/>
    <property type="evidence" value="ECO:0007669"/>
    <property type="project" value="UniProtKB-KW"/>
</dbReference>
<dbReference type="GO" id="GO:0039545">
    <property type="term" value="P:symbiont-mediated suppression of host cytoplasmic pattern recognition receptor signaling pathway via inhibition of MAVS activity"/>
    <property type="evidence" value="ECO:0007669"/>
    <property type="project" value="UniProtKB-KW"/>
</dbReference>
<dbReference type="HAMAP" id="MF_04064">
    <property type="entry name" value="INFV_PB1F2"/>
    <property type="match status" value="1"/>
</dbReference>
<dbReference type="InterPro" id="IPR021045">
    <property type="entry name" value="Flu_proapoptotic_PB1-F2"/>
</dbReference>
<dbReference type="Pfam" id="PF11986">
    <property type="entry name" value="PB1-F2"/>
    <property type="match status" value="1"/>
</dbReference>
<comment type="function">
    <text evidence="1">Plays an important role in promoting lung pathology in both primary viral infection and secondary bacterial infection. Promotes alteration of mitochondrial morphology, dissipation of mitochondrial membrane potential, and cell death. Alternatively, inhibits the production of interferon in the infected cell at the level of host mitochondrial antiviral signaling MAVS. Its level of expression differs greatly depending on which cell type is infected, in a manner that is independent of the levels of expression of other viral proteins. Monocytic cells are more affected than epithelial cells. Seems to disable virus-infected monocytes or other host innate immune cells. During early stage of infection, predisposes the mitochondria to permeability transition through interaction with host SLC25A6/ANT3 and VDAC1. These proteins participate in the formation of the permeability transition pore complex (PTPC) responsible of the release of mitochondrial products that triggers apoptosis.</text>
</comment>
<comment type="subunit">
    <text evidence="1">Oligomer. Interacts with human SLC25A6/ANT3 and VDAC1. Interacts with host MAVS.</text>
</comment>
<comment type="subcellular location">
    <subcellularLocation>
        <location evidence="1">Host mitochondrion inner membrane</location>
    </subcellularLocation>
    <subcellularLocation>
        <location evidence="1">Host nucleus</location>
    </subcellularLocation>
    <subcellularLocation>
        <location evidence="1">Host cytoplasm</location>
        <location evidence="1">Host cytosol</location>
    </subcellularLocation>
    <text evidence="1">Inner mitochondrial membrane in most cells types. Otherwise is detected in the nucleus and cytosol.</text>
</comment>
<comment type="miscellaneous">
    <text>Is not encoded in all strains, and seems to be dispensable for replication.</text>
</comment>
<comment type="similarity">
    <text evidence="1">Belongs to the influenza viruses PB1-F2 family.</text>
</comment>
<organismHost>
    <name type="scientific">Aves</name>
    <dbReference type="NCBI Taxonomy" id="8782"/>
</organismHost>
<organismHost>
    <name type="scientific">Cetacea</name>
    <name type="common">whales</name>
    <dbReference type="NCBI Taxonomy" id="9721"/>
</organismHost>
<organismHost>
    <name type="scientific">Homo sapiens</name>
    <name type="common">Human</name>
    <dbReference type="NCBI Taxonomy" id="9606"/>
</organismHost>
<organismHost>
    <name type="scientific">Phocidae</name>
    <name type="common">true seals</name>
    <dbReference type="NCBI Taxonomy" id="9709"/>
</organismHost>
<organismHost>
    <name type="scientific">Sus scrofa</name>
    <name type="common">Pig</name>
    <dbReference type="NCBI Taxonomy" id="9823"/>
</organismHost>
<keyword id="KW-0053">Apoptosis</keyword>
<keyword id="KW-1035">Host cytoplasm</keyword>
<keyword id="KW-1043">Host membrane</keyword>
<keyword id="KW-1045">Host mitochondrion</keyword>
<keyword id="KW-1046">Host mitochondrion inner membrane</keyword>
<keyword id="KW-1048">Host nucleus</keyword>
<keyword id="KW-0945">Host-virus interaction</keyword>
<keyword id="KW-1090">Inhibition of host innate immune response by virus</keyword>
<keyword id="KW-1097">Inhibition of host MAVS by virus</keyword>
<keyword id="KW-1113">Inhibition of host RLR pathway by virus</keyword>
<keyword id="KW-0472">Membrane</keyword>
<keyword id="KW-1119">Modulation of host cell apoptosis by virus</keyword>
<keyword id="KW-0899">Viral immunoevasion</keyword>
<feature type="chain" id="PRO_0000278702" description="Protein PB1-F2">
    <location>
        <begin position="1"/>
        <end position="90"/>
    </location>
</feature>
<feature type="region of interest" description="Disordered" evidence="2">
    <location>
        <begin position="1"/>
        <end position="31"/>
    </location>
</feature>
<feature type="region of interest" description="Mitochondrial targeting sequence" evidence="1">
    <location>
        <begin position="65"/>
        <end position="87"/>
    </location>
</feature>
<feature type="site" description="Low pathogenicity" evidence="1">
    <location>
        <position position="66"/>
    </location>
</feature>
<proteinExistence type="inferred from homology"/>
<gene>
    <name evidence="1" type="primary">PB1</name>
</gene>